<dbReference type="EC" id="2.3.1.275" evidence="1"/>
<dbReference type="EMBL" id="CP000709">
    <property type="protein sequence ID" value="ABQ62303.1"/>
    <property type="molecule type" value="Genomic_DNA"/>
</dbReference>
<dbReference type="RefSeq" id="WP_004687269.1">
    <property type="nucleotide sequence ID" value="NC_009504.1"/>
</dbReference>
<dbReference type="SMR" id="A5VUT3"/>
<dbReference type="GeneID" id="97535275"/>
<dbReference type="KEGG" id="bov:BOV_A0566"/>
<dbReference type="HOGENOM" id="CLU_081254_1_0_5"/>
<dbReference type="PhylomeDB" id="A5VUT3"/>
<dbReference type="UniPathway" id="UPA00085"/>
<dbReference type="Proteomes" id="UP000006383">
    <property type="component" value="Chromosome II"/>
</dbReference>
<dbReference type="GO" id="GO:0005886">
    <property type="term" value="C:plasma membrane"/>
    <property type="evidence" value="ECO:0007669"/>
    <property type="project" value="UniProtKB-SubCell"/>
</dbReference>
<dbReference type="GO" id="GO:0043772">
    <property type="term" value="F:acyl-phosphate glycerol-3-phosphate acyltransferase activity"/>
    <property type="evidence" value="ECO:0007669"/>
    <property type="project" value="UniProtKB-UniRule"/>
</dbReference>
<dbReference type="GO" id="GO:0008654">
    <property type="term" value="P:phospholipid biosynthetic process"/>
    <property type="evidence" value="ECO:0007669"/>
    <property type="project" value="UniProtKB-UniRule"/>
</dbReference>
<dbReference type="HAMAP" id="MF_01043">
    <property type="entry name" value="PlsY"/>
    <property type="match status" value="1"/>
</dbReference>
<dbReference type="InterPro" id="IPR003811">
    <property type="entry name" value="G3P_acylTferase_PlsY"/>
</dbReference>
<dbReference type="NCBIfam" id="TIGR00023">
    <property type="entry name" value="glycerol-3-phosphate 1-O-acyltransferase PlsY"/>
    <property type="match status" value="1"/>
</dbReference>
<dbReference type="PANTHER" id="PTHR30309:SF0">
    <property type="entry name" value="GLYCEROL-3-PHOSPHATE ACYLTRANSFERASE-RELATED"/>
    <property type="match status" value="1"/>
</dbReference>
<dbReference type="PANTHER" id="PTHR30309">
    <property type="entry name" value="INNER MEMBRANE PROTEIN YGIH"/>
    <property type="match status" value="1"/>
</dbReference>
<dbReference type="Pfam" id="PF02660">
    <property type="entry name" value="G3P_acyltransf"/>
    <property type="match status" value="1"/>
</dbReference>
<dbReference type="SMART" id="SM01207">
    <property type="entry name" value="G3P_acyltransf"/>
    <property type="match status" value="1"/>
</dbReference>
<feature type="chain" id="PRO_1000064161" description="Glycerol-3-phosphate acyltransferase">
    <location>
        <begin position="1"/>
        <end position="201"/>
    </location>
</feature>
<feature type="transmembrane region" description="Helical" evidence="1">
    <location>
        <begin position="10"/>
        <end position="30"/>
    </location>
</feature>
<feature type="transmembrane region" description="Helical" evidence="1">
    <location>
        <begin position="60"/>
        <end position="80"/>
    </location>
</feature>
<feature type="transmembrane region" description="Helical" evidence="1">
    <location>
        <begin position="86"/>
        <end position="106"/>
    </location>
</feature>
<feature type="transmembrane region" description="Helical" evidence="1">
    <location>
        <begin position="116"/>
        <end position="136"/>
    </location>
</feature>
<feature type="transmembrane region" description="Helical" evidence="1">
    <location>
        <begin position="139"/>
        <end position="159"/>
    </location>
</feature>
<feature type="transmembrane region" description="Helical" evidence="1">
    <location>
        <begin position="166"/>
        <end position="186"/>
    </location>
</feature>
<sequence length="201" mass="20537">MAEPGFFNAMLIGALIFGYVLGSIPFGLILTRLAGLGDVRAIGSGNIGATNVLRTGNKKLAAATLILDALKGTAAALIAAHFGQNAAIAAGFGAFIGHLFPVWIGFKGGKGVATYLGVLIGLAWAGALVFAAAWIVTALLTRYSSLSALVASLVVPIALYSRGNQALAALFAIMTVIVFIKHRANISRLLNGTESKIGAKG</sequence>
<organism>
    <name type="scientific">Brucella ovis (strain ATCC 25840 / 63/290 / NCTC 10512)</name>
    <dbReference type="NCBI Taxonomy" id="444178"/>
    <lineage>
        <taxon>Bacteria</taxon>
        <taxon>Pseudomonadati</taxon>
        <taxon>Pseudomonadota</taxon>
        <taxon>Alphaproteobacteria</taxon>
        <taxon>Hyphomicrobiales</taxon>
        <taxon>Brucellaceae</taxon>
        <taxon>Brucella/Ochrobactrum group</taxon>
        <taxon>Brucella</taxon>
    </lineage>
</organism>
<keyword id="KW-0997">Cell inner membrane</keyword>
<keyword id="KW-1003">Cell membrane</keyword>
<keyword id="KW-0444">Lipid biosynthesis</keyword>
<keyword id="KW-0443">Lipid metabolism</keyword>
<keyword id="KW-0472">Membrane</keyword>
<keyword id="KW-0594">Phospholipid biosynthesis</keyword>
<keyword id="KW-1208">Phospholipid metabolism</keyword>
<keyword id="KW-0808">Transferase</keyword>
<keyword id="KW-0812">Transmembrane</keyword>
<keyword id="KW-1133">Transmembrane helix</keyword>
<name>PLSY_BRUO2</name>
<comment type="function">
    <text evidence="1">Catalyzes the transfer of an acyl group from acyl-phosphate (acyl-PO(4)) to glycerol-3-phosphate (G3P) to form lysophosphatidic acid (LPA). This enzyme utilizes acyl-phosphate as fatty acyl donor, but not acyl-CoA or acyl-ACP.</text>
</comment>
<comment type="catalytic activity">
    <reaction evidence="1">
        <text>an acyl phosphate + sn-glycerol 3-phosphate = a 1-acyl-sn-glycero-3-phosphate + phosphate</text>
        <dbReference type="Rhea" id="RHEA:34075"/>
        <dbReference type="ChEBI" id="CHEBI:43474"/>
        <dbReference type="ChEBI" id="CHEBI:57597"/>
        <dbReference type="ChEBI" id="CHEBI:57970"/>
        <dbReference type="ChEBI" id="CHEBI:59918"/>
        <dbReference type="EC" id="2.3.1.275"/>
    </reaction>
</comment>
<comment type="pathway">
    <text evidence="1">Lipid metabolism; phospholipid metabolism.</text>
</comment>
<comment type="subunit">
    <text evidence="1">Probably interacts with PlsX.</text>
</comment>
<comment type="subcellular location">
    <subcellularLocation>
        <location evidence="1">Cell inner membrane</location>
        <topology evidence="1">Multi-pass membrane protein</topology>
    </subcellularLocation>
</comment>
<comment type="similarity">
    <text evidence="1">Belongs to the PlsY family.</text>
</comment>
<gene>
    <name evidence="1" type="primary">plsY</name>
    <name type="ordered locus">BOV_A0566</name>
</gene>
<accession>A5VUT3</accession>
<reference key="1">
    <citation type="journal article" date="2009" name="PLoS ONE">
        <title>Genome degradation in Brucella ovis corresponds with narrowing of its host range and tissue tropism.</title>
        <authorList>
            <person name="Tsolis R.M."/>
            <person name="Seshadri R."/>
            <person name="Santos R.L."/>
            <person name="Sangari F.J."/>
            <person name="Lobo J.M."/>
            <person name="de Jong M.F."/>
            <person name="Ren Q."/>
            <person name="Myers G."/>
            <person name="Brinkac L.M."/>
            <person name="Nelson W.C."/>
            <person name="Deboy R.T."/>
            <person name="Angiuoli S."/>
            <person name="Khouri H."/>
            <person name="Dimitrov G."/>
            <person name="Robinson J.R."/>
            <person name="Mulligan S."/>
            <person name="Walker R.L."/>
            <person name="Elzer P.E."/>
            <person name="Hassan K.A."/>
            <person name="Paulsen I.T."/>
        </authorList>
    </citation>
    <scope>NUCLEOTIDE SEQUENCE [LARGE SCALE GENOMIC DNA]</scope>
    <source>
        <strain>ATCC 25840 / 63/290 / NCTC 10512</strain>
    </source>
</reference>
<evidence type="ECO:0000255" key="1">
    <source>
        <dbReference type="HAMAP-Rule" id="MF_01043"/>
    </source>
</evidence>
<protein>
    <recommendedName>
        <fullName evidence="1">Glycerol-3-phosphate acyltransferase</fullName>
    </recommendedName>
    <alternativeName>
        <fullName evidence="1">Acyl-PO4 G3P acyltransferase</fullName>
    </alternativeName>
    <alternativeName>
        <fullName evidence="1">Acyl-phosphate--glycerol-3-phosphate acyltransferase</fullName>
    </alternativeName>
    <alternativeName>
        <fullName evidence="1">G3P acyltransferase</fullName>
        <shortName evidence="1">GPAT</shortName>
        <ecNumber evidence="1">2.3.1.275</ecNumber>
    </alternativeName>
    <alternativeName>
        <fullName evidence="1">Lysophosphatidic acid synthase</fullName>
        <shortName evidence="1">LPA synthase</shortName>
    </alternativeName>
</protein>
<proteinExistence type="inferred from homology"/>